<gene>
    <name type="primary">Casp3</name>
    <name type="synonym">Cpp32</name>
</gene>
<dbReference type="EC" id="3.4.22.56"/>
<dbReference type="EMBL" id="U49930">
    <property type="protein sequence ID" value="AAC52765.1"/>
    <property type="molecule type" value="mRNA"/>
</dbReference>
<dbReference type="EMBL" id="U84410">
    <property type="protein sequence ID" value="AAB41792.1"/>
    <property type="molecule type" value="mRNA"/>
</dbReference>
<dbReference type="EMBL" id="BC081854">
    <property type="protein sequence ID" value="AAH81854.1"/>
    <property type="molecule type" value="mRNA"/>
</dbReference>
<dbReference type="EMBL" id="U58656">
    <property type="protein sequence ID" value="AAB02722.1"/>
    <property type="molecule type" value="mRNA"/>
</dbReference>
<dbReference type="EMBL" id="U34685">
    <property type="protein sequence ID" value="AAC52261.1"/>
    <property type="molecule type" value="mRNA"/>
</dbReference>
<dbReference type="PIR" id="I67437">
    <property type="entry name" value="I67437"/>
</dbReference>
<dbReference type="RefSeq" id="NP_037054.1">
    <property type="nucleotide sequence ID" value="NM_012922.2"/>
</dbReference>
<dbReference type="RefSeq" id="XP_006253192.1">
    <property type="nucleotide sequence ID" value="XM_006253130.5"/>
</dbReference>
<dbReference type="SMR" id="P55213"/>
<dbReference type="BioGRID" id="247437">
    <property type="interactions" value="1"/>
</dbReference>
<dbReference type="ELM" id="P55213"/>
<dbReference type="FunCoup" id="P55213">
    <property type="interactions" value="2466"/>
</dbReference>
<dbReference type="IntAct" id="P55213">
    <property type="interactions" value="1"/>
</dbReference>
<dbReference type="MINT" id="P55213"/>
<dbReference type="STRING" id="10116.ENSRNOP00000014096"/>
<dbReference type="ChEMBL" id="CHEMBL1075185"/>
<dbReference type="MEROPS" id="C14.003"/>
<dbReference type="iPTMnet" id="P55213"/>
<dbReference type="PhosphoSitePlus" id="P55213"/>
<dbReference type="jPOST" id="P55213"/>
<dbReference type="PaxDb" id="10116-ENSRNOP00000014096"/>
<dbReference type="DNASU" id="25402"/>
<dbReference type="Ensembl" id="ENSRNOT00000014095.6">
    <property type="protein sequence ID" value="ENSRNOP00000014096.3"/>
    <property type="gene ID" value="ENSRNOG00000010475.6"/>
</dbReference>
<dbReference type="GeneID" id="25402"/>
<dbReference type="KEGG" id="rno:25402"/>
<dbReference type="AGR" id="RGD:2275"/>
<dbReference type="CTD" id="836"/>
<dbReference type="RGD" id="2275">
    <property type="gene designation" value="Casp3"/>
</dbReference>
<dbReference type="eggNOG" id="KOG3573">
    <property type="taxonomic scope" value="Eukaryota"/>
</dbReference>
<dbReference type="GeneTree" id="ENSGT00940000153232"/>
<dbReference type="HOGENOM" id="CLU_036904_2_0_1"/>
<dbReference type="InParanoid" id="P55213"/>
<dbReference type="OMA" id="HFTANHC"/>
<dbReference type="OrthoDB" id="6116485at2759"/>
<dbReference type="PhylomeDB" id="P55213"/>
<dbReference type="TreeFam" id="TF102023"/>
<dbReference type="BRENDA" id="3.4.22.56">
    <property type="organism ID" value="5301"/>
</dbReference>
<dbReference type="Reactome" id="R-RNO-111459">
    <property type="pathway name" value="Activation of caspases through apoptosome-mediated cleavage"/>
</dbReference>
<dbReference type="Reactome" id="R-RNO-111465">
    <property type="pathway name" value="Apoptotic cleavage of cellular proteins"/>
</dbReference>
<dbReference type="Reactome" id="R-RNO-111469">
    <property type="pathway name" value="SMAC, XIAP-regulated apoptotic response"/>
</dbReference>
<dbReference type="Reactome" id="R-RNO-140342">
    <property type="pathway name" value="Apoptosis induced DNA fragmentation"/>
</dbReference>
<dbReference type="Reactome" id="R-RNO-2028269">
    <property type="pathway name" value="Signaling by Hippo"/>
</dbReference>
<dbReference type="Reactome" id="R-RNO-205025">
    <property type="pathway name" value="NADE modulates death signalling"/>
</dbReference>
<dbReference type="Reactome" id="R-RNO-264870">
    <property type="pathway name" value="Caspase-mediated cleavage of cytoskeletal proteins"/>
</dbReference>
<dbReference type="Reactome" id="R-RNO-351906">
    <property type="pathway name" value="Apoptotic cleavage of cell adhesion proteins"/>
</dbReference>
<dbReference type="Reactome" id="R-RNO-418889">
    <property type="pathway name" value="Caspase activation via Dependence Receptors in the absence of ligand"/>
</dbReference>
<dbReference type="Reactome" id="R-RNO-449836">
    <property type="pathway name" value="Other interleukin signaling"/>
</dbReference>
<dbReference type="Reactome" id="R-RNO-5620971">
    <property type="pathway name" value="Pyroptosis"/>
</dbReference>
<dbReference type="PRO" id="PR:P55213"/>
<dbReference type="Proteomes" id="UP000002494">
    <property type="component" value="Chromosome 16"/>
</dbReference>
<dbReference type="Bgee" id="ENSRNOG00000010475">
    <property type="expression patterns" value="Expressed in duodenum and 20 other cell types or tissues"/>
</dbReference>
<dbReference type="GO" id="GO:0005737">
    <property type="term" value="C:cytoplasm"/>
    <property type="evidence" value="ECO:0000314"/>
    <property type="project" value="RGD"/>
</dbReference>
<dbReference type="GO" id="GO:0005829">
    <property type="term" value="C:cytosol"/>
    <property type="evidence" value="ECO:0000266"/>
    <property type="project" value="RGD"/>
</dbReference>
<dbReference type="GO" id="GO:0031264">
    <property type="term" value="C:death-inducing signaling complex"/>
    <property type="evidence" value="ECO:0000314"/>
    <property type="project" value="RGD"/>
</dbReference>
<dbReference type="GO" id="GO:0098978">
    <property type="term" value="C:glutamatergic synapse"/>
    <property type="evidence" value="ECO:0000266"/>
    <property type="project" value="RGD"/>
</dbReference>
<dbReference type="GO" id="GO:0043025">
    <property type="term" value="C:neuronal cell body"/>
    <property type="evidence" value="ECO:0000314"/>
    <property type="project" value="RGD"/>
</dbReference>
<dbReference type="GO" id="GO:0005634">
    <property type="term" value="C:nucleus"/>
    <property type="evidence" value="ECO:0000266"/>
    <property type="project" value="RGD"/>
</dbReference>
<dbReference type="GO" id="GO:0014069">
    <property type="term" value="C:postsynaptic density"/>
    <property type="evidence" value="ECO:0000266"/>
    <property type="project" value="RGD"/>
</dbReference>
<dbReference type="GO" id="GO:0004190">
    <property type="term" value="F:aspartic-type endopeptidase activity"/>
    <property type="evidence" value="ECO:0000266"/>
    <property type="project" value="RGD"/>
</dbReference>
<dbReference type="GO" id="GO:0004861">
    <property type="term" value="F:cyclin-dependent protein serine/threonine kinase inhibitor activity"/>
    <property type="evidence" value="ECO:0000266"/>
    <property type="project" value="RGD"/>
</dbReference>
<dbReference type="GO" id="GO:0004197">
    <property type="term" value="F:cysteine-type endopeptidase activity"/>
    <property type="evidence" value="ECO:0000250"/>
    <property type="project" value="UniProtKB"/>
</dbReference>
<dbReference type="GO" id="GO:0008234">
    <property type="term" value="F:cysteine-type peptidase activity"/>
    <property type="evidence" value="ECO:0000314"/>
    <property type="project" value="RGD"/>
</dbReference>
<dbReference type="GO" id="GO:0005123">
    <property type="term" value="F:death receptor binding"/>
    <property type="evidence" value="ECO:0000353"/>
    <property type="project" value="RGD"/>
</dbReference>
<dbReference type="GO" id="GO:0004175">
    <property type="term" value="F:endopeptidase activity"/>
    <property type="evidence" value="ECO:0000250"/>
    <property type="project" value="UniProtKB"/>
</dbReference>
<dbReference type="GO" id="GO:0008047">
    <property type="term" value="F:enzyme activator activity"/>
    <property type="evidence" value="ECO:0000318"/>
    <property type="project" value="GO_Central"/>
</dbReference>
<dbReference type="GO" id="GO:0008233">
    <property type="term" value="F:peptidase activity"/>
    <property type="evidence" value="ECO:0000266"/>
    <property type="project" value="RGD"/>
</dbReference>
<dbReference type="GO" id="GO:0016005">
    <property type="term" value="F:phospholipase A2 activator activity"/>
    <property type="evidence" value="ECO:0000315"/>
    <property type="project" value="RGD"/>
</dbReference>
<dbReference type="GO" id="GO:0002020">
    <property type="term" value="F:protease binding"/>
    <property type="evidence" value="ECO:0000353"/>
    <property type="project" value="RGD"/>
</dbReference>
<dbReference type="GO" id="GO:0044877">
    <property type="term" value="F:protein-containing complex binding"/>
    <property type="evidence" value="ECO:0000353"/>
    <property type="project" value="RGD"/>
</dbReference>
<dbReference type="GO" id="GO:0061713">
    <property type="term" value="P:anterior neural tube closure"/>
    <property type="evidence" value="ECO:0000266"/>
    <property type="project" value="RGD"/>
</dbReference>
<dbReference type="GO" id="GO:0006915">
    <property type="term" value="P:apoptotic process"/>
    <property type="evidence" value="ECO:0000266"/>
    <property type="project" value="RGD"/>
</dbReference>
<dbReference type="GO" id="GO:0007413">
    <property type="term" value="P:axonal fasciculation"/>
    <property type="evidence" value="ECO:0000315"/>
    <property type="project" value="RGD"/>
</dbReference>
<dbReference type="GO" id="GO:0001782">
    <property type="term" value="P:B cell homeostasis"/>
    <property type="evidence" value="ECO:0000266"/>
    <property type="project" value="RGD"/>
</dbReference>
<dbReference type="GO" id="GO:0045165">
    <property type="term" value="P:cell fate commitment"/>
    <property type="evidence" value="ECO:0000266"/>
    <property type="project" value="RGD"/>
</dbReference>
<dbReference type="GO" id="GO:0072734">
    <property type="term" value="P:cellular response to staurosporine"/>
    <property type="evidence" value="ECO:0000266"/>
    <property type="project" value="RGD"/>
</dbReference>
<dbReference type="GO" id="GO:0006974">
    <property type="term" value="P:DNA damage response"/>
    <property type="evidence" value="ECO:0000266"/>
    <property type="project" value="RGD"/>
</dbReference>
<dbReference type="GO" id="GO:1904019">
    <property type="term" value="P:epithelial cell apoptotic process"/>
    <property type="evidence" value="ECO:0000266"/>
    <property type="project" value="RGD"/>
</dbReference>
<dbReference type="GO" id="GO:0030218">
    <property type="term" value="P:erythrocyte differentiation"/>
    <property type="evidence" value="ECO:0000266"/>
    <property type="project" value="RGD"/>
</dbReference>
<dbReference type="GO" id="GO:0097194">
    <property type="term" value="P:execution phase of apoptosis"/>
    <property type="evidence" value="ECO:0000266"/>
    <property type="project" value="RGD"/>
</dbReference>
<dbReference type="GO" id="GO:0044346">
    <property type="term" value="P:fibroblast apoptotic process"/>
    <property type="evidence" value="ECO:0000266"/>
    <property type="project" value="RGD"/>
</dbReference>
<dbReference type="GO" id="GO:0034349">
    <property type="term" value="P:glial cell apoptotic process"/>
    <property type="evidence" value="ECO:0000270"/>
    <property type="project" value="RGD"/>
</dbReference>
<dbReference type="GO" id="GO:0007507">
    <property type="term" value="P:heart development"/>
    <property type="evidence" value="ECO:0000266"/>
    <property type="project" value="RGD"/>
</dbReference>
<dbReference type="GO" id="GO:0021766">
    <property type="term" value="P:hippocampus development"/>
    <property type="evidence" value="ECO:0000270"/>
    <property type="project" value="RGD"/>
</dbReference>
<dbReference type="GO" id="GO:0035556">
    <property type="term" value="P:intracellular signal transduction"/>
    <property type="evidence" value="ECO:0000315"/>
    <property type="project" value="RGD"/>
</dbReference>
<dbReference type="GO" id="GO:0097193">
    <property type="term" value="P:intrinsic apoptotic signaling pathway"/>
    <property type="evidence" value="ECO:0000266"/>
    <property type="project" value="RGD"/>
</dbReference>
<dbReference type="GO" id="GO:0008627">
    <property type="term" value="P:intrinsic apoptotic signaling pathway in response to osmotic stress"/>
    <property type="evidence" value="ECO:0000266"/>
    <property type="project" value="RGD"/>
</dbReference>
<dbReference type="GO" id="GO:0030216">
    <property type="term" value="P:keratinocyte differentiation"/>
    <property type="evidence" value="ECO:0000266"/>
    <property type="project" value="RGD"/>
</dbReference>
<dbReference type="GO" id="GO:0007611">
    <property type="term" value="P:learning or memory"/>
    <property type="evidence" value="ECO:0000315"/>
    <property type="project" value="RGD"/>
</dbReference>
<dbReference type="GO" id="GO:0071887">
    <property type="term" value="P:leukocyte apoptotic process"/>
    <property type="evidence" value="ECO:0000270"/>
    <property type="project" value="RGD"/>
</dbReference>
<dbReference type="GO" id="GO:0001554">
    <property type="term" value="P:luteolysis"/>
    <property type="evidence" value="ECO:0000270"/>
    <property type="project" value="RGD"/>
</dbReference>
<dbReference type="GO" id="GO:0046007">
    <property type="term" value="P:negative regulation of activated T cell proliferation"/>
    <property type="evidence" value="ECO:0000266"/>
    <property type="project" value="RGD"/>
</dbReference>
<dbReference type="GO" id="GO:0030889">
    <property type="term" value="P:negative regulation of B cell proliferation"/>
    <property type="evidence" value="ECO:0000266"/>
    <property type="project" value="RGD"/>
</dbReference>
<dbReference type="GO" id="GO:0045786">
    <property type="term" value="P:negative regulation of cell cycle"/>
    <property type="evidence" value="ECO:0000266"/>
    <property type="project" value="RGD"/>
</dbReference>
<dbReference type="GO" id="GO:0001818">
    <property type="term" value="P:negative regulation of cytokine production"/>
    <property type="evidence" value="ECO:0000266"/>
    <property type="project" value="RGD"/>
</dbReference>
<dbReference type="GO" id="GO:0051402">
    <property type="term" value="P:neuron apoptotic process"/>
    <property type="evidence" value="ECO:0000266"/>
    <property type="project" value="RGD"/>
</dbReference>
<dbReference type="GO" id="GO:0030182">
    <property type="term" value="P:neuron differentiation"/>
    <property type="evidence" value="ECO:0000270"/>
    <property type="project" value="RGD"/>
</dbReference>
<dbReference type="GO" id="GO:0048011">
    <property type="term" value="P:neurotrophin TRK receptor signaling pathway"/>
    <property type="evidence" value="ECO:0000266"/>
    <property type="project" value="RGD"/>
</dbReference>
<dbReference type="GO" id="GO:1902004">
    <property type="term" value="P:positive regulation of amyloid-beta formation"/>
    <property type="evidence" value="ECO:0000314"/>
    <property type="project" value="UniProtKB"/>
</dbReference>
<dbReference type="GO" id="GO:0043065">
    <property type="term" value="P:positive regulation of apoptotic process"/>
    <property type="evidence" value="ECO:0000315"/>
    <property type="project" value="RGD"/>
</dbReference>
<dbReference type="GO" id="GO:0043525">
    <property type="term" value="P:positive regulation of neuron apoptotic process"/>
    <property type="evidence" value="ECO:0000315"/>
    <property type="project" value="RGD"/>
</dbReference>
<dbReference type="GO" id="GO:0140639">
    <property type="term" value="P:positive regulation of pyroptotic inflammatory response"/>
    <property type="evidence" value="ECO:0000266"/>
    <property type="project" value="RGD"/>
</dbReference>
<dbReference type="GO" id="GO:0030163">
    <property type="term" value="P:protein catabolic process"/>
    <property type="evidence" value="ECO:0000314"/>
    <property type="project" value="RGD"/>
</dbReference>
<dbReference type="GO" id="GO:0051604">
    <property type="term" value="P:protein maturation"/>
    <property type="evidence" value="ECO:0000266"/>
    <property type="project" value="RGD"/>
</dbReference>
<dbReference type="GO" id="GO:0016485">
    <property type="term" value="P:protein processing"/>
    <property type="evidence" value="ECO:0000266"/>
    <property type="project" value="RGD"/>
</dbReference>
<dbReference type="GO" id="GO:0006508">
    <property type="term" value="P:proteolysis"/>
    <property type="evidence" value="ECO:0000314"/>
    <property type="project" value="UniProtKB"/>
</dbReference>
<dbReference type="GO" id="GO:0070269">
    <property type="term" value="P:pyroptotic inflammatory response"/>
    <property type="evidence" value="ECO:0000266"/>
    <property type="project" value="RGD"/>
</dbReference>
<dbReference type="GO" id="GO:0031647">
    <property type="term" value="P:regulation of protein stability"/>
    <property type="evidence" value="ECO:0000314"/>
    <property type="project" value="UniProtKB"/>
</dbReference>
<dbReference type="GO" id="GO:0098693">
    <property type="term" value="P:regulation of synaptic vesicle cycle"/>
    <property type="evidence" value="ECO:0000266"/>
    <property type="project" value="RGD"/>
</dbReference>
<dbReference type="GO" id="GO:0043200">
    <property type="term" value="P:response to amino acid"/>
    <property type="evidence" value="ECO:0000270"/>
    <property type="project" value="RGD"/>
</dbReference>
<dbReference type="GO" id="GO:0072347">
    <property type="term" value="P:response to anesthetic"/>
    <property type="evidence" value="ECO:0000270"/>
    <property type="project" value="RGD"/>
</dbReference>
<dbReference type="GO" id="GO:0032025">
    <property type="term" value="P:response to cobalt ion"/>
    <property type="evidence" value="ECO:0000270"/>
    <property type="project" value="RGD"/>
</dbReference>
<dbReference type="GO" id="GO:0032355">
    <property type="term" value="P:response to estradiol"/>
    <property type="evidence" value="ECO:0000270"/>
    <property type="project" value="RGD"/>
</dbReference>
<dbReference type="GO" id="GO:0051384">
    <property type="term" value="P:response to glucocorticoid"/>
    <property type="evidence" value="ECO:0000270"/>
    <property type="project" value="RGD"/>
</dbReference>
<dbReference type="GO" id="GO:0009749">
    <property type="term" value="P:response to glucose"/>
    <property type="evidence" value="ECO:0000314"/>
    <property type="project" value="RGD"/>
</dbReference>
<dbReference type="GO" id="GO:0042542">
    <property type="term" value="P:response to hydrogen peroxide"/>
    <property type="evidence" value="ECO:0000314"/>
    <property type="project" value="RGD"/>
</dbReference>
<dbReference type="GO" id="GO:0001666">
    <property type="term" value="P:response to hypoxia"/>
    <property type="evidence" value="ECO:0000270"/>
    <property type="project" value="RGD"/>
</dbReference>
<dbReference type="GO" id="GO:0032496">
    <property type="term" value="P:response to lipopolysaccharide"/>
    <property type="evidence" value="ECO:0000270"/>
    <property type="project" value="RGD"/>
</dbReference>
<dbReference type="GO" id="GO:0010038">
    <property type="term" value="P:response to metal ion"/>
    <property type="evidence" value="ECO:0000270"/>
    <property type="project" value="RGD"/>
</dbReference>
<dbReference type="GO" id="GO:0035094">
    <property type="term" value="P:response to nicotine"/>
    <property type="evidence" value="ECO:0000270"/>
    <property type="project" value="RGD"/>
</dbReference>
<dbReference type="GO" id="GO:0009411">
    <property type="term" value="P:response to UV"/>
    <property type="evidence" value="ECO:0000266"/>
    <property type="project" value="RGD"/>
</dbReference>
<dbReference type="GO" id="GO:0009611">
    <property type="term" value="P:response to wounding"/>
    <property type="evidence" value="ECO:0000266"/>
    <property type="project" value="RGD"/>
</dbReference>
<dbReference type="GO" id="GO:0010165">
    <property type="term" value="P:response to X-ray"/>
    <property type="evidence" value="ECO:0000270"/>
    <property type="project" value="RGD"/>
</dbReference>
<dbReference type="GO" id="GO:0009410">
    <property type="term" value="P:response to xenobiotic stimulus"/>
    <property type="evidence" value="ECO:0000270"/>
    <property type="project" value="RGD"/>
</dbReference>
<dbReference type="GO" id="GO:0007605">
    <property type="term" value="P:sensory perception of sound"/>
    <property type="evidence" value="ECO:0000266"/>
    <property type="project" value="RGD"/>
</dbReference>
<dbReference type="GO" id="GO:0051146">
    <property type="term" value="P:striated muscle cell differentiation"/>
    <property type="evidence" value="ECO:0000270"/>
    <property type="project" value="RGD"/>
</dbReference>
<dbReference type="GO" id="GO:0043029">
    <property type="term" value="P:T cell homeostasis"/>
    <property type="evidence" value="ECO:0000266"/>
    <property type="project" value="RGD"/>
</dbReference>
<dbReference type="CDD" id="cd00032">
    <property type="entry name" value="CASc"/>
    <property type="match status" value="1"/>
</dbReference>
<dbReference type="FunFam" id="3.40.50.1460:FF:000001">
    <property type="entry name" value="Caspase-3 preproprotein"/>
    <property type="match status" value="1"/>
</dbReference>
<dbReference type="Gene3D" id="3.40.50.1460">
    <property type="match status" value="1"/>
</dbReference>
<dbReference type="InterPro" id="IPR029030">
    <property type="entry name" value="Caspase-like_dom_sf"/>
</dbReference>
<dbReference type="InterPro" id="IPR033139">
    <property type="entry name" value="Caspase_cys_AS"/>
</dbReference>
<dbReference type="InterPro" id="IPR016129">
    <property type="entry name" value="Caspase_his_AS"/>
</dbReference>
<dbReference type="InterPro" id="IPR002398">
    <property type="entry name" value="Pept_C14"/>
</dbReference>
<dbReference type="InterPro" id="IPR011600">
    <property type="entry name" value="Pept_C14_caspase"/>
</dbReference>
<dbReference type="InterPro" id="IPR002138">
    <property type="entry name" value="Pept_C14_p10"/>
</dbReference>
<dbReference type="InterPro" id="IPR001309">
    <property type="entry name" value="Pept_C14_p20"/>
</dbReference>
<dbReference type="InterPro" id="IPR015917">
    <property type="entry name" value="Pept_C14A"/>
</dbReference>
<dbReference type="PANTHER" id="PTHR10454">
    <property type="entry name" value="CASPASE"/>
    <property type="match status" value="1"/>
</dbReference>
<dbReference type="PANTHER" id="PTHR10454:SF198">
    <property type="entry name" value="CASPASE-3"/>
    <property type="match status" value="1"/>
</dbReference>
<dbReference type="Pfam" id="PF00656">
    <property type="entry name" value="Peptidase_C14"/>
    <property type="match status" value="1"/>
</dbReference>
<dbReference type="PRINTS" id="PR00376">
    <property type="entry name" value="IL1BCENZYME"/>
</dbReference>
<dbReference type="SMART" id="SM00115">
    <property type="entry name" value="CASc"/>
    <property type="match status" value="1"/>
</dbReference>
<dbReference type="SUPFAM" id="SSF52129">
    <property type="entry name" value="Caspase-like"/>
    <property type="match status" value="1"/>
</dbReference>
<dbReference type="PROSITE" id="PS01122">
    <property type="entry name" value="CASPASE_CYS"/>
    <property type="match status" value="1"/>
</dbReference>
<dbReference type="PROSITE" id="PS01121">
    <property type="entry name" value="CASPASE_HIS"/>
    <property type="match status" value="1"/>
</dbReference>
<dbReference type="PROSITE" id="PS50207">
    <property type="entry name" value="CASPASE_P10"/>
    <property type="match status" value="1"/>
</dbReference>
<dbReference type="PROSITE" id="PS50208">
    <property type="entry name" value="CASPASE_P20"/>
    <property type="match status" value="1"/>
</dbReference>
<protein>
    <recommendedName>
        <fullName>Caspase-3</fullName>
        <shortName>CASP-3</shortName>
        <ecNumber>3.4.22.56</ecNumber>
    </recommendedName>
    <alternativeName>
        <fullName>Apopain</fullName>
    </alternativeName>
    <alternativeName>
        <fullName>Cysteine protease CPP32</fullName>
        <shortName>CPP-32</shortName>
    </alternativeName>
    <alternativeName>
        <fullName>IRP</fullName>
    </alternativeName>
    <alternativeName>
        <fullName>LICE</fullName>
    </alternativeName>
    <alternativeName>
        <fullName>Protein Yama</fullName>
    </alternativeName>
    <alternativeName>
        <fullName>SREBP cleavage activity 1</fullName>
        <shortName>SCA-1</shortName>
    </alternativeName>
    <component>
        <recommendedName>
            <fullName>Caspase-3 subunit p17</fullName>
        </recommendedName>
    </component>
    <component>
        <recommendedName>
            <fullName>Caspase-3 subunit p12</fullName>
        </recommendedName>
    </component>
</protein>
<organism>
    <name type="scientific">Rattus norvegicus</name>
    <name type="common">Rat</name>
    <dbReference type="NCBI Taxonomy" id="10116"/>
    <lineage>
        <taxon>Eukaryota</taxon>
        <taxon>Metazoa</taxon>
        <taxon>Chordata</taxon>
        <taxon>Craniata</taxon>
        <taxon>Vertebrata</taxon>
        <taxon>Euteleostomi</taxon>
        <taxon>Mammalia</taxon>
        <taxon>Eutheria</taxon>
        <taxon>Euarchontoglires</taxon>
        <taxon>Glires</taxon>
        <taxon>Rodentia</taxon>
        <taxon>Myomorpha</taxon>
        <taxon>Muroidea</taxon>
        <taxon>Muridae</taxon>
        <taxon>Murinae</taxon>
        <taxon>Rattus</taxon>
    </lineage>
</organism>
<feature type="propeptide" id="PRO_0000004589" evidence="2">
    <location>
        <begin position="1"/>
        <end position="9"/>
    </location>
</feature>
<feature type="propeptide" id="PRO_0000004590" evidence="2">
    <location>
        <begin position="10"/>
        <end position="28"/>
    </location>
</feature>
<feature type="chain" id="PRO_0000004591" description="Caspase-3 subunit p17" evidence="2">
    <location>
        <begin position="29"/>
        <end position="175"/>
    </location>
</feature>
<feature type="chain" id="PRO_0000004592" description="Caspase-3 subunit p12" evidence="2">
    <location>
        <begin position="176"/>
        <end position="277"/>
    </location>
</feature>
<feature type="active site" evidence="1">
    <location>
        <position position="121"/>
    </location>
</feature>
<feature type="active site" evidence="1">
    <location>
        <position position="163"/>
    </location>
</feature>
<feature type="modified residue" description="N-acetylmethionine" evidence="2">
    <location>
        <position position="1"/>
    </location>
</feature>
<feature type="modified residue" description="N6-acetyllysine" evidence="3">
    <location>
        <position position="11"/>
    </location>
</feature>
<feature type="modified residue" description="Phosphoserine" evidence="2">
    <location>
        <position position="26"/>
    </location>
</feature>
<feature type="modified residue" description="S-nitrosocysteine; in inhibited form" evidence="2">
    <location>
        <position position="163"/>
    </location>
</feature>
<feature type="sequence conflict" description="In Ref. 4; AAB02722." evidence="4" ref="4">
    <original>KSMDS</original>
    <variation>QVD</variation>
    <location>
        <begin position="25"/>
        <end position="29"/>
    </location>
</feature>
<feature type="sequence conflict" description="In Ref. 5; AAC52261." evidence="4" ref="5">
    <original>C</original>
    <variation>S</variation>
    <location>
        <position position="170"/>
    </location>
</feature>
<feature type="sequence conflict" description="In Ref. 5; AAC52261." evidence="4" ref="5">
    <original>T</original>
    <variation>A</variation>
    <location>
        <position position="178"/>
    </location>
</feature>
<feature type="sequence conflict" description="In Ref. 5; AAC52261." evidence="4" ref="5">
    <original>M</original>
    <variation>V</variation>
    <location>
        <position position="182"/>
    </location>
</feature>
<feature type="sequence conflict" description="In Ref. 5; AAC52261." evidence="4" ref="5">
    <original>I</original>
    <variation>K</variation>
    <location>
        <position position="187"/>
    </location>
</feature>
<feature type="sequence conflict" description="In Ref. 2; AAB41792." evidence="4" ref="2">
    <original>E</original>
    <variation>G</variation>
    <location>
        <position position="190"/>
    </location>
</feature>
<feature type="sequence conflict" description="In Ref. 5; AAC52261." evidence="4" ref="5">
    <original>T</original>
    <variation>S</variation>
    <location>
        <position position="199"/>
    </location>
</feature>
<feature type="sequence conflict" description="In Ref. 5; AAC52261." evidence="4" ref="5">
    <original>D</original>
    <variation>G</variation>
    <location>
        <position position="211"/>
    </location>
</feature>
<feature type="sequence conflict" description="In Ref. 4; AAB02722." evidence="4" ref="4">
    <original>L</original>
    <variation>I</variation>
    <location>
        <position position="236"/>
    </location>
</feature>
<feature type="sequence conflict" description="In Ref. 2; AAB41792." evidence="4" ref="2">
    <original>T</original>
    <variation>M</variation>
    <location>
        <position position="245"/>
    </location>
</feature>
<sequence>MDNNETSVDSKSINNFETKTIHGSKSMDSGIYLDSSYKMDYPEMGLCIIINNKNFHKSTGMSARNGTDVDAANLRETFMALKYEVRNKNDLTREEIMELMDSVSKEDHSKRSSFVCVILSHGDEGVIFGTNGPVDLKKLTSFFRGDYCRSLTGKPKLFIIQACRGTELDCGIETDSGTDDDMACQKIPVEADFLYAYSTAPGYYSWRNSRDGSWFIQSLCAMLKLYAHKLEFMHILTRVNRKVATEFESFSLDATFHAKKQIPCIVSMLTKELYFYH</sequence>
<evidence type="ECO:0000250" key="1">
    <source>
        <dbReference type="UniProtKB" id="P29466"/>
    </source>
</evidence>
<evidence type="ECO:0000250" key="2">
    <source>
        <dbReference type="UniProtKB" id="P42574"/>
    </source>
</evidence>
<evidence type="ECO:0000250" key="3">
    <source>
        <dbReference type="UniProtKB" id="P70677"/>
    </source>
</evidence>
<evidence type="ECO:0000305" key="4"/>
<name>CASP3_RAT</name>
<accession>P55213</accession>
<accession>P70543</accession>
<accession>P97699</accession>
<accession>Q62993</accession>
<proteinExistence type="evidence at transcript level"/>
<reference key="1">
    <citation type="journal article" date="1996" name="Oncogene">
        <title>Molecular characterization of mouse and rat CPP32 beta gene encoding a cysteine protease resembling interleukin-1 beta converting enzyme and CED-3.</title>
        <authorList>
            <person name="Juan T.S.-C."/>
            <person name="McNiece I.K."/>
            <person name="Jenkins N.A."/>
            <person name="Gilbert D.J."/>
            <person name="Copeland N.G."/>
            <person name="Fletcher F.A."/>
        </authorList>
    </citation>
    <scope>NUCLEOTIDE SEQUENCE [MRNA]</scope>
</reference>
<reference key="2">
    <citation type="journal article" date="1997" name="J. Neurosci.">
        <title>Cloning and expression of a rat brain interleukin-1beta-converting enzyme (ICE)-related protease (IRP) and its possible role in apoptosis of cultured cerebellar granule neurons.</title>
        <authorList>
            <person name="Ni B."/>
            <person name="Wu X."/>
            <person name="Du Y."/>
            <person name="Su Y."/>
            <person name="Hamilton-Byrd E."/>
            <person name="Rockey P.K."/>
            <person name="Rosteck P. Jr."/>
            <person name="Poirier G.G."/>
            <person name="Paul S.M."/>
        </authorList>
    </citation>
    <scope>NUCLEOTIDE SEQUENCE [MRNA]</scope>
    <source>
        <tissue>Brain</tissue>
    </source>
</reference>
<reference key="3">
    <citation type="journal article" date="2004" name="Genome Res.">
        <title>The status, quality, and expansion of the NIH full-length cDNA project: the Mammalian Gene Collection (MGC).</title>
        <authorList>
            <consortium name="The MGC Project Team"/>
        </authorList>
    </citation>
    <scope>NUCLEOTIDE SEQUENCE [LARGE SCALE MRNA]</scope>
    <source>
        <tissue>Heart</tissue>
    </source>
</reference>
<reference key="4">
    <citation type="submission" date="1996-06" db="EMBL/GenBank/DDBJ databases">
        <title>Cloning of the rat cysteine protease p32-beta.</title>
        <authorList>
            <person name="Yakovlev A.G."/>
        </authorList>
    </citation>
    <scope>NUCLEOTIDE SEQUENCE [MRNA] OF 1-264</scope>
</reference>
<reference key="5">
    <citation type="journal article" date="1995" name="Endocrinology">
        <title>Interleukin-1 beta-converting enzyme-related proteases (IRPs) and mammalian cell death: dissociation of IRP-induced oligonucleosomal endonuclease activity from morphological apoptosis in granulosa cells of the ovarian follicle.</title>
        <authorList>
            <person name="Flaws J.A."/>
            <person name="Kugu K."/>
            <person name="Trbovich A.M."/>
            <person name="Desanti A."/>
            <person name="Tilly K.I."/>
            <person name="Hirshfield A.N."/>
            <person name="Tilly J.L."/>
        </authorList>
    </citation>
    <scope>NUCLEOTIDE SEQUENCE [MRNA] OF 30-241</scope>
    <source>
        <tissue>Ovary</tissue>
    </source>
</reference>
<comment type="function">
    <text evidence="2 3">Involved in the activation cascade of caspases responsible for apoptosis execution. At the onset of apoptosis, it proteolytically cleaves poly(ADP-ribose) polymerase PARP1 at a '216-Asp-|-Gly-217' bond. Cleaves and activates sterol regulatory element binding proteins (SREBPs) between the basic helix-loop-helix leucine zipper domain and the membrane attachment domain. Cleaves and activates caspase-6, -7 and -9 (CASP6, CASP7 and CASP9, respectively). Cleaves and inactivates interleukin-18 (IL18). Triggers cell adhesion in sympathetic neurons through RET cleavage (By similarity). Cleaves IL-1 beta between an Asp and an Ala, releasing the mature cytokine which is involved in a variety of inflammatory processes (By similarity). Cleaves and inhibits serine/threonine-protein kinase AKT1 in response to oxidative stress. Acts as an inhibitor of type I interferon production during virus-induced apoptosis by mediating cleavage of antiviral proteins CGAS, IRF3 and MAVS, thereby preventing cytokine overproduction. Also involved in pyroptosis by mediating cleavage and activation of gasdermin-E (GSDME) (By similarity). Cleaves XRCC4 and phospholipid scramblase proteins XKR4, XKR8 and XKR9, leading to promote phosphatidylserine exposure on apoptotic cell surface (By similarity). Cleaves BIRC6 following inhibition of BIRC6-caspase binding by DIABLO/SMAC (By similarity).</text>
</comment>
<comment type="catalytic activity">
    <reaction evidence="2">
        <text>Strict requirement for an Asp residue at positions P1 and P4. It has a preferred cleavage sequence of Asp-Xaa-Xaa-Asp-|- with a hydrophobic amino-acid residue at P2 and a hydrophilic amino-acid residue at P3, although Val or Ala are also accepted at this position.</text>
        <dbReference type="EC" id="3.4.22.56"/>
    </reaction>
</comment>
<comment type="activity regulation">
    <text evidence="2">Inhibited by BIRC6; following inhibition of BIRC6-caspase binding by DIABLO/SMAC, BIRC6 is subjected to caspase cleavage, leading to an increase in active caspases.</text>
</comment>
<comment type="subunit">
    <text evidence="2">Heterotetramer that consists of two anti-parallel arranged heterodimers, each one formed by a 17 kDa (p17) and a 12 kDa (p12) subunit. Interacts with BIRC6/bruce.</text>
</comment>
<comment type="subcellular location">
    <subcellularLocation>
        <location evidence="2">Cytoplasm</location>
    </subcellularLocation>
</comment>
<comment type="tissue specificity">
    <text>Expressed in heart, brain, liver, and muscle but not in kidney or testis.</text>
</comment>
<comment type="developmental stage">
    <text>Highly expressed in neuron-enriched regions of the developing brain, but down-regulated to low levels in the adult brain.</text>
</comment>
<comment type="PTM">
    <text evidence="2">Cleavage by granzyme B, caspase-6, caspase-8 and caspase-10 generates the two active subunits. Additional processing of the propeptides is likely due to the autocatalytic activity of the activated protease. Active heterodimers between the small subunit of caspase-7 protease and the large subunit of caspase-3 also occur and vice versa.</text>
</comment>
<comment type="PTM">
    <text evidence="2">S-nitrosylated on its catalytic site cysteine in unstimulated cell lines and denitrosylated upon activation of the Fas apoptotic pathway, associated with an increase in intracellular caspase activity. Fas therefore activates caspase-3 not only by inducing the cleavage of the caspase zymogen to its active subunits, but also by stimulating the denitrosylation of its active site thiol.</text>
</comment>
<comment type="PTM">
    <text evidence="2">Ubiquitinated by BIRC6; this activity is inhibited by DIABLO/SMAC.</text>
</comment>
<comment type="similarity">
    <text evidence="4">Belongs to the peptidase C14A family.</text>
</comment>
<keyword id="KW-0007">Acetylation</keyword>
<keyword id="KW-0053">Apoptosis</keyword>
<keyword id="KW-0963">Cytoplasm</keyword>
<keyword id="KW-0378">Hydrolase</keyword>
<keyword id="KW-0597">Phosphoprotein</keyword>
<keyword id="KW-0645">Protease</keyword>
<keyword id="KW-1185">Reference proteome</keyword>
<keyword id="KW-0702">S-nitrosylation</keyword>
<keyword id="KW-0788">Thiol protease</keyword>
<keyword id="KW-0832">Ubl conjugation</keyword>
<keyword id="KW-0865">Zymogen</keyword>